<protein>
    <recommendedName>
        <fullName evidence="1">Ribose-5-phosphate isomerase A</fullName>
        <ecNumber evidence="1">5.3.1.6</ecNumber>
    </recommendedName>
    <alternativeName>
        <fullName evidence="1">Phosphoriboisomerase A</fullName>
        <shortName evidence="1">PRI</shortName>
    </alternativeName>
</protein>
<organism>
    <name type="scientific">Roseiflexus sp. (strain RS-1)</name>
    <dbReference type="NCBI Taxonomy" id="357808"/>
    <lineage>
        <taxon>Bacteria</taxon>
        <taxon>Bacillati</taxon>
        <taxon>Chloroflexota</taxon>
        <taxon>Chloroflexia</taxon>
        <taxon>Chloroflexales</taxon>
        <taxon>Roseiflexineae</taxon>
        <taxon>Roseiflexaceae</taxon>
        <taxon>Roseiflexus</taxon>
    </lineage>
</organism>
<feature type="chain" id="PRO_1000058301" description="Ribose-5-phosphate isomerase A">
    <location>
        <begin position="1"/>
        <end position="233"/>
    </location>
</feature>
<feature type="active site" description="Proton acceptor" evidence="1">
    <location>
        <position position="107"/>
    </location>
</feature>
<feature type="binding site" evidence="1">
    <location>
        <begin position="28"/>
        <end position="31"/>
    </location>
    <ligand>
        <name>substrate</name>
    </ligand>
</feature>
<feature type="binding site" evidence="1">
    <location>
        <begin position="85"/>
        <end position="88"/>
    </location>
    <ligand>
        <name>substrate</name>
    </ligand>
</feature>
<feature type="binding site" evidence="1">
    <location>
        <begin position="98"/>
        <end position="101"/>
    </location>
    <ligand>
        <name>substrate</name>
    </ligand>
</feature>
<feature type="binding site" evidence="1">
    <location>
        <position position="125"/>
    </location>
    <ligand>
        <name>substrate</name>
    </ligand>
</feature>
<sequence>MDDNLYRQRAAEHALRHVESGMTIGLGTGSTATFMLYGLAARLADGRLQRVTGVPTSEVTAALARELGIPLTTLDRQPHLDLALDGADEIDPQLRLIKGLGGAMLREKIVAASAARFVVMAAVSKCVERLGERSPLPVEVVAFGLPLCARRLKALGGAPALRRDRSGAPFVTDEGNLILDCNFGIIADPEALAASICAIPGVVAHGLFLGMASLAVIAGPDGIVELHAPSARQ</sequence>
<name>RPIA_ROSS1</name>
<gene>
    <name evidence="1" type="primary">rpiA</name>
    <name type="ordered locus">RoseRS_2910</name>
</gene>
<accession>A5UXC5</accession>
<comment type="function">
    <text evidence="1">Catalyzes the reversible conversion of ribose-5-phosphate to ribulose 5-phosphate.</text>
</comment>
<comment type="catalytic activity">
    <reaction evidence="1">
        <text>aldehydo-D-ribose 5-phosphate = D-ribulose 5-phosphate</text>
        <dbReference type="Rhea" id="RHEA:14657"/>
        <dbReference type="ChEBI" id="CHEBI:58121"/>
        <dbReference type="ChEBI" id="CHEBI:58273"/>
        <dbReference type="EC" id="5.3.1.6"/>
    </reaction>
</comment>
<comment type="pathway">
    <text evidence="1">Carbohydrate degradation; pentose phosphate pathway; D-ribose 5-phosphate from D-ribulose 5-phosphate (non-oxidative stage): step 1/1.</text>
</comment>
<comment type="subunit">
    <text evidence="1">Homodimer.</text>
</comment>
<comment type="similarity">
    <text evidence="1">Belongs to the ribose 5-phosphate isomerase family.</text>
</comment>
<proteinExistence type="inferred from homology"/>
<keyword id="KW-0413">Isomerase</keyword>
<evidence type="ECO:0000255" key="1">
    <source>
        <dbReference type="HAMAP-Rule" id="MF_00170"/>
    </source>
</evidence>
<reference key="1">
    <citation type="submission" date="2007-04" db="EMBL/GenBank/DDBJ databases">
        <title>Complete sequence of Roseiflexus sp. RS-1.</title>
        <authorList>
            <consortium name="US DOE Joint Genome Institute"/>
            <person name="Copeland A."/>
            <person name="Lucas S."/>
            <person name="Lapidus A."/>
            <person name="Barry K."/>
            <person name="Detter J.C."/>
            <person name="Glavina del Rio T."/>
            <person name="Hammon N."/>
            <person name="Israni S."/>
            <person name="Dalin E."/>
            <person name="Tice H."/>
            <person name="Pitluck S."/>
            <person name="Chertkov O."/>
            <person name="Brettin T."/>
            <person name="Bruce D."/>
            <person name="Han C."/>
            <person name="Schmutz J."/>
            <person name="Larimer F."/>
            <person name="Land M."/>
            <person name="Hauser L."/>
            <person name="Kyrpides N."/>
            <person name="Mikhailova N."/>
            <person name="Bryant D.A."/>
            <person name="Richardson P."/>
        </authorList>
    </citation>
    <scope>NUCLEOTIDE SEQUENCE [LARGE SCALE GENOMIC DNA]</scope>
    <source>
        <strain>RS-1</strain>
    </source>
</reference>
<dbReference type="EC" id="5.3.1.6" evidence="1"/>
<dbReference type="EMBL" id="CP000686">
    <property type="protein sequence ID" value="ABQ91278.1"/>
    <property type="molecule type" value="Genomic_DNA"/>
</dbReference>
<dbReference type="RefSeq" id="WP_011957622.1">
    <property type="nucleotide sequence ID" value="NC_009523.1"/>
</dbReference>
<dbReference type="SMR" id="A5UXC5"/>
<dbReference type="STRING" id="357808.RoseRS_2910"/>
<dbReference type="KEGG" id="rrs:RoseRS_2910"/>
<dbReference type="eggNOG" id="COG0120">
    <property type="taxonomic scope" value="Bacteria"/>
</dbReference>
<dbReference type="HOGENOM" id="CLU_056590_1_1_0"/>
<dbReference type="OrthoDB" id="5870696at2"/>
<dbReference type="UniPathway" id="UPA00115">
    <property type="reaction ID" value="UER00412"/>
</dbReference>
<dbReference type="Proteomes" id="UP000006554">
    <property type="component" value="Chromosome"/>
</dbReference>
<dbReference type="GO" id="GO:0004751">
    <property type="term" value="F:ribose-5-phosphate isomerase activity"/>
    <property type="evidence" value="ECO:0007669"/>
    <property type="project" value="UniProtKB-UniRule"/>
</dbReference>
<dbReference type="GO" id="GO:0009052">
    <property type="term" value="P:pentose-phosphate shunt, non-oxidative branch"/>
    <property type="evidence" value="ECO:0007669"/>
    <property type="project" value="UniProtKB-UniRule"/>
</dbReference>
<dbReference type="CDD" id="cd01398">
    <property type="entry name" value="RPI_A"/>
    <property type="match status" value="1"/>
</dbReference>
<dbReference type="FunFam" id="3.40.50.1360:FF:000001">
    <property type="entry name" value="Ribose-5-phosphate isomerase A"/>
    <property type="match status" value="1"/>
</dbReference>
<dbReference type="Gene3D" id="3.30.70.260">
    <property type="match status" value="1"/>
</dbReference>
<dbReference type="Gene3D" id="3.40.50.1360">
    <property type="match status" value="1"/>
</dbReference>
<dbReference type="HAMAP" id="MF_00170">
    <property type="entry name" value="Rib_5P_isom_A"/>
    <property type="match status" value="1"/>
</dbReference>
<dbReference type="InterPro" id="IPR037171">
    <property type="entry name" value="NagB/RpiA_transferase-like"/>
</dbReference>
<dbReference type="InterPro" id="IPR050262">
    <property type="entry name" value="Ribose-5P_isomerase"/>
</dbReference>
<dbReference type="InterPro" id="IPR020672">
    <property type="entry name" value="Ribose5P_isomerase_typA_subgr"/>
</dbReference>
<dbReference type="InterPro" id="IPR004788">
    <property type="entry name" value="Ribose5P_isomerase_type_A"/>
</dbReference>
<dbReference type="NCBIfam" id="NF001924">
    <property type="entry name" value="PRK00702.1"/>
    <property type="match status" value="1"/>
</dbReference>
<dbReference type="NCBIfam" id="TIGR00021">
    <property type="entry name" value="rpiA"/>
    <property type="match status" value="1"/>
</dbReference>
<dbReference type="PANTHER" id="PTHR43748">
    <property type="entry name" value="RIBOSE-5-PHOSPHATE ISOMERASE 3, CHLOROPLASTIC-RELATED"/>
    <property type="match status" value="1"/>
</dbReference>
<dbReference type="PANTHER" id="PTHR43748:SF3">
    <property type="entry name" value="RIBOSE-5-PHOSPHATE ISOMERASE 3, CHLOROPLASTIC-RELATED"/>
    <property type="match status" value="1"/>
</dbReference>
<dbReference type="Pfam" id="PF06026">
    <property type="entry name" value="Rib_5-P_isom_A"/>
    <property type="match status" value="1"/>
</dbReference>
<dbReference type="SUPFAM" id="SSF75445">
    <property type="entry name" value="D-ribose-5-phosphate isomerase (RpiA), lid domain"/>
    <property type="match status" value="1"/>
</dbReference>
<dbReference type="SUPFAM" id="SSF100950">
    <property type="entry name" value="NagB/RpiA/CoA transferase-like"/>
    <property type="match status" value="1"/>
</dbReference>